<comment type="catalytic activity">
    <reaction evidence="1">
        <text>D-erythro-1-(imidazol-4-yl)glycerol 3-phosphate = 3-(imidazol-4-yl)-2-oxopropyl phosphate + H2O</text>
        <dbReference type="Rhea" id="RHEA:11040"/>
        <dbReference type="ChEBI" id="CHEBI:15377"/>
        <dbReference type="ChEBI" id="CHEBI:57766"/>
        <dbReference type="ChEBI" id="CHEBI:58278"/>
        <dbReference type="EC" id="4.2.1.19"/>
    </reaction>
</comment>
<comment type="pathway">
    <text evidence="1">Amino-acid biosynthesis; L-histidine biosynthesis; L-histidine from 5-phospho-alpha-D-ribose 1-diphosphate: step 6/9.</text>
</comment>
<comment type="subcellular location">
    <subcellularLocation>
        <location evidence="1">Cytoplasm</location>
    </subcellularLocation>
</comment>
<comment type="similarity">
    <text evidence="1">Belongs to the imidazoleglycerol-phosphate dehydratase family.</text>
</comment>
<organism>
    <name type="scientific">Brucella suis (strain ATCC 23445 / NCTC 10510)</name>
    <dbReference type="NCBI Taxonomy" id="470137"/>
    <lineage>
        <taxon>Bacteria</taxon>
        <taxon>Pseudomonadati</taxon>
        <taxon>Pseudomonadota</taxon>
        <taxon>Alphaproteobacteria</taxon>
        <taxon>Hyphomicrobiales</taxon>
        <taxon>Brucellaceae</taxon>
        <taxon>Brucella/Ochrobactrum group</taxon>
        <taxon>Brucella</taxon>
    </lineage>
</organism>
<dbReference type="EC" id="4.2.1.19" evidence="1"/>
<dbReference type="EMBL" id="CP000911">
    <property type="protein sequence ID" value="ABY38934.1"/>
    <property type="molecule type" value="Genomic_DNA"/>
</dbReference>
<dbReference type="RefSeq" id="WP_006071778.1">
    <property type="nucleotide sequence ID" value="NC_010169.1"/>
</dbReference>
<dbReference type="SMR" id="B0CJI2"/>
<dbReference type="KEGG" id="bmt:BSUIS_A1923"/>
<dbReference type="HOGENOM" id="CLU_044308_3_0_5"/>
<dbReference type="UniPathway" id="UPA00031">
    <property type="reaction ID" value="UER00011"/>
</dbReference>
<dbReference type="Proteomes" id="UP000008545">
    <property type="component" value="Chromosome I"/>
</dbReference>
<dbReference type="GO" id="GO:0005737">
    <property type="term" value="C:cytoplasm"/>
    <property type="evidence" value="ECO:0007669"/>
    <property type="project" value="UniProtKB-SubCell"/>
</dbReference>
<dbReference type="GO" id="GO:0004424">
    <property type="term" value="F:imidazoleglycerol-phosphate dehydratase activity"/>
    <property type="evidence" value="ECO:0007669"/>
    <property type="project" value="UniProtKB-UniRule"/>
</dbReference>
<dbReference type="GO" id="GO:0000105">
    <property type="term" value="P:L-histidine biosynthetic process"/>
    <property type="evidence" value="ECO:0007669"/>
    <property type="project" value="UniProtKB-UniRule"/>
</dbReference>
<dbReference type="CDD" id="cd07914">
    <property type="entry name" value="IGPD"/>
    <property type="match status" value="1"/>
</dbReference>
<dbReference type="FunFam" id="3.30.230.40:FF:000001">
    <property type="entry name" value="Imidazoleglycerol-phosphate dehydratase HisB"/>
    <property type="match status" value="1"/>
</dbReference>
<dbReference type="FunFam" id="3.30.230.40:FF:000003">
    <property type="entry name" value="Imidazoleglycerol-phosphate dehydratase HisB"/>
    <property type="match status" value="1"/>
</dbReference>
<dbReference type="Gene3D" id="3.30.230.40">
    <property type="entry name" value="Imidazole glycerol phosphate dehydratase, domain 1"/>
    <property type="match status" value="2"/>
</dbReference>
<dbReference type="HAMAP" id="MF_00076">
    <property type="entry name" value="HisB"/>
    <property type="match status" value="1"/>
</dbReference>
<dbReference type="InterPro" id="IPR038494">
    <property type="entry name" value="IGPD_sf"/>
</dbReference>
<dbReference type="InterPro" id="IPR000807">
    <property type="entry name" value="ImidazoleglycerolP_deHydtase"/>
</dbReference>
<dbReference type="InterPro" id="IPR020565">
    <property type="entry name" value="ImidazoleglycerP_deHydtase_CS"/>
</dbReference>
<dbReference type="InterPro" id="IPR020568">
    <property type="entry name" value="Ribosomal_Su5_D2-typ_SF"/>
</dbReference>
<dbReference type="NCBIfam" id="NF002109">
    <property type="entry name" value="PRK00951.1-5"/>
    <property type="match status" value="1"/>
</dbReference>
<dbReference type="NCBIfam" id="NF002111">
    <property type="entry name" value="PRK00951.2-1"/>
    <property type="match status" value="1"/>
</dbReference>
<dbReference type="NCBIfam" id="NF002114">
    <property type="entry name" value="PRK00951.2-4"/>
    <property type="match status" value="1"/>
</dbReference>
<dbReference type="PANTHER" id="PTHR23133:SF2">
    <property type="entry name" value="IMIDAZOLEGLYCEROL-PHOSPHATE DEHYDRATASE"/>
    <property type="match status" value="1"/>
</dbReference>
<dbReference type="PANTHER" id="PTHR23133">
    <property type="entry name" value="IMIDAZOLEGLYCEROL-PHOSPHATE DEHYDRATASE HIS7"/>
    <property type="match status" value="1"/>
</dbReference>
<dbReference type="Pfam" id="PF00475">
    <property type="entry name" value="IGPD"/>
    <property type="match status" value="1"/>
</dbReference>
<dbReference type="SUPFAM" id="SSF54211">
    <property type="entry name" value="Ribosomal protein S5 domain 2-like"/>
    <property type="match status" value="2"/>
</dbReference>
<dbReference type="PROSITE" id="PS00954">
    <property type="entry name" value="IGP_DEHYDRATASE_1"/>
    <property type="match status" value="1"/>
</dbReference>
<dbReference type="PROSITE" id="PS00955">
    <property type="entry name" value="IGP_DEHYDRATASE_2"/>
    <property type="match status" value="1"/>
</dbReference>
<sequence length="202" mass="21987">MTAESTRKASIERSTKETSIAVSVDLDGVGKFDITTGVGFFDHMLEQLSRHSLIDMRVMAKGDLHIDDHHTVEDTGITLGQAVAKALGERRGIVRYASLDLAMDDTLTGAAVDVSGRAFLVWNVNFTTAKIGTFDTELVREFFQAFAMNAGITLHINNHYGANNHHIAESTFKAVARVLRAALETDPRQKDAIPSTKGSLKG</sequence>
<protein>
    <recommendedName>
        <fullName evidence="1">Imidazoleglycerol-phosphate dehydratase</fullName>
        <shortName evidence="1">IGPD</shortName>
        <ecNumber evidence="1">4.2.1.19</ecNumber>
    </recommendedName>
</protein>
<proteinExistence type="inferred from homology"/>
<feature type="chain" id="PRO_1000075240" description="Imidazoleglycerol-phosphate dehydratase">
    <location>
        <begin position="1"/>
        <end position="202"/>
    </location>
</feature>
<gene>
    <name evidence="1" type="primary">hisB</name>
    <name type="ordered locus">BSUIS_A1923</name>
</gene>
<reference key="1">
    <citation type="submission" date="2007-12" db="EMBL/GenBank/DDBJ databases">
        <title>Brucella suis ATCC 23445 whole genome shotgun sequencing project.</title>
        <authorList>
            <person name="Setubal J.C."/>
            <person name="Bowns C."/>
            <person name="Boyle S."/>
            <person name="Crasta O.R."/>
            <person name="Czar M.J."/>
            <person name="Dharmanolla C."/>
            <person name="Gillespie J.J."/>
            <person name="Kenyon R.W."/>
            <person name="Lu J."/>
            <person name="Mane S."/>
            <person name="Mohapatra S."/>
            <person name="Nagrani S."/>
            <person name="Purkayastha A."/>
            <person name="Rajasimha H.K."/>
            <person name="Shallom J.M."/>
            <person name="Shallom S."/>
            <person name="Shukla M."/>
            <person name="Snyder E.E."/>
            <person name="Sobral B.W."/>
            <person name="Wattam A.R."/>
            <person name="Will R."/>
            <person name="Williams K."/>
            <person name="Yoo H."/>
            <person name="Bruce D."/>
            <person name="Detter C."/>
            <person name="Munk C."/>
            <person name="Brettin T.S."/>
        </authorList>
    </citation>
    <scope>NUCLEOTIDE SEQUENCE [LARGE SCALE GENOMIC DNA]</scope>
    <source>
        <strain>ATCC 23445 / NCTC 10510</strain>
    </source>
</reference>
<accession>B0CJI2</accession>
<name>HIS7_BRUSI</name>
<evidence type="ECO:0000255" key="1">
    <source>
        <dbReference type="HAMAP-Rule" id="MF_00076"/>
    </source>
</evidence>
<keyword id="KW-0028">Amino-acid biosynthesis</keyword>
<keyword id="KW-0963">Cytoplasm</keyword>
<keyword id="KW-0368">Histidine biosynthesis</keyword>
<keyword id="KW-0456">Lyase</keyword>